<name>YPFN_ECO55</name>
<sequence length="66" mass="8071">MDWLAKYWWILVIVFLVGVLLNVIKDLKRVDHKKFLANKPELPPHRDFNDKWDDDDDWPKKDQPKK</sequence>
<gene>
    <name evidence="1" type="primary">ypfN</name>
    <name type="ordered locus">EC55989_2753</name>
</gene>
<evidence type="ECO:0000255" key="1">
    <source>
        <dbReference type="HAMAP-Rule" id="MF_01566"/>
    </source>
</evidence>
<evidence type="ECO:0000256" key="2">
    <source>
        <dbReference type="SAM" id="MobiDB-lite"/>
    </source>
</evidence>
<accession>B7LCK8</accession>
<dbReference type="EMBL" id="CU928145">
    <property type="protein sequence ID" value="CAU98619.1"/>
    <property type="molecule type" value="Genomic_DNA"/>
</dbReference>
<dbReference type="RefSeq" id="WP_000383836.1">
    <property type="nucleotide sequence ID" value="NZ_CP028304.1"/>
</dbReference>
<dbReference type="SMR" id="B7LCK8"/>
<dbReference type="KEGG" id="eck:EC55989_2753"/>
<dbReference type="HOGENOM" id="CLU_198936_0_0_6"/>
<dbReference type="Proteomes" id="UP000000746">
    <property type="component" value="Chromosome"/>
</dbReference>
<dbReference type="GO" id="GO:0005886">
    <property type="term" value="C:plasma membrane"/>
    <property type="evidence" value="ECO:0007669"/>
    <property type="project" value="UniProtKB-SubCell"/>
</dbReference>
<dbReference type="HAMAP" id="MF_01566">
    <property type="entry name" value="UPF0370"/>
    <property type="match status" value="1"/>
</dbReference>
<dbReference type="InterPro" id="IPR020910">
    <property type="entry name" value="UPF0370"/>
</dbReference>
<dbReference type="NCBIfam" id="NF010185">
    <property type="entry name" value="PRK13664.1"/>
    <property type="match status" value="1"/>
</dbReference>
<dbReference type="Pfam" id="PF13980">
    <property type="entry name" value="UPF0370"/>
    <property type="match status" value="1"/>
</dbReference>
<proteinExistence type="inferred from homology"/>
<comment type="subcellular location">
    <subcellularLocation>
        <location evidence="1">Cell membrane</location>
        <topology evidence="1">Single-pass membrane protein</topology>
    </subcellularLocation>
</comment>
<comment type="similarity">
    <text evidence="1">Belongs to the UPF0370 family.</text>
</comment>
<feature type="chain" id="PRO_1000185456" description="UPF0370 protein YpfN">
    <location>
        <begin position="1"/>
        <end position="66"/>
    </location>
</feature>
<feature type="transmembrane region" description="Helical" evidence="1">
    <location>
        <begin position="4"/>
        <end position="24"/>
    </location>
</feature>
<feature type="region of interest" description="Disordered" evidence="2">
    <location>
        <begin position="39"/>
        <end position="66"/>
    </location>
</feature>
<feature type="compositionally biased region" description="Basic and acidic residues" evidence="2">
    <location>
        <begin position="42"/>
        <end position="51"/>
    </location>
</feature>
<organism>
    <name type="scientific">Escherichia coli (strain 55989 / EAEC)</name>
    <dbReference type="NCBI Taxonomy" id="585055"/>
    <lineage>
        <taxon>Bacteria</taxon>
        <taxon>Pseudomonadati</taxon>
        <taxon>Pseudomonadota</taxon>
        <taxon>Gammaproteobacteria</taxon>
        <taxon>Enterobacterales</taxon>
        <taxon>Enterobacteriaceae</taxon>
        <taxon>Escherichia</taxon>
    </lineage>
</organism>
<reference key="1">
    <citation type="journal article" date="2009" name="PLoS Genet.">
        <title>Organised genome dynamics in the Escherichia coli species results in highly diverse adaptive paths.</title>
        <authorList>
            <person name="Touchon M."/>
            <person name="Hoede C."/>
            <person name="Tenaillon O."/>
            <person name="Barbe V."/>
            <person name="Baeriswyl S."/>
            <person name="Bidet P."/>
            <person name="Bingen E."/>
            <person name="Bonacorsi S."/>
            <person name="Bouchier C."/>
            <person name="Bouvet O."/>
            <person name="Calteau A."/>
            <person name="Chiapello H."/>
            <person name="Clermont O."/>
            <person name="Cruveiller S."/>
            <person name="Danchin A."/>
            <person name="Diard M."/>
            <person name="Dossat C."/>
            <person name="Karoui M.E."/>
            <person name="Frapy E."/>
            <person name="Garry L."/>
            <person name="Ghigo J.M."/>
            <person name="Gilles A.M."/>
            <person name="Johnson J."/>
            <person name="Le Bouguenec C."/>
            <person name="Lescat M."/>
            <person name="Mangenot S."/>
            <person name="Martinez-Jehanne V."/>
            <person name="Matic I."/>
            <person name="Nassif X."/>
            <person name="Oztas S."/>
            <person name="Petit M.A."/>
            <person name="Pichon C."/>
            <person name="Rouy Z."/>
            <person name="Ruf C.S."/>
            <person name="Schneider D."/>
            <person name="Tourret J."/>
            <person name="Vacherie B."/>
            <person name="Vallenet D."/>
            <person name="Medigue C."/>
            <person name="Rocha E.P.C."/>
            <person name="Denamur E."/>
        </authorList>
    </citation>
    <scope>NUCLEOTIDE SEQUENCE [LARGE SCALE GENOMIC DNA]</scope>
    <source>
        <strain>55989 / EAEC</strain>
    </source>
</reference>
<keyword id="KW-1003">Cell membrane</keyword>
<keyword id="KW-0472">Membrane</keyword>
<keyword id="KW-1185">Reference proteome</keyword>
<keyword id="KW-0812">Transmembrane</keyword>
<keyword id="KW-1133">Transmembrane helix</keyword>
<protein>
    <recommendedName>
        <fullName evidence="1">UPF0370 protein YpfN</fullName>
    </recommendedName>
</protein>